<gene>
    <name type="primary">rbg-5</name>
    <name type="synonym">utp10</name>
    <name type="ORF">NCU00336</name>
</gene>
<dbReference type="EMBL" id="CM002238">
    <property type="protein sequence ID" value="EAA28571.1"/>
    <property type="molecule type" value="Genomic_DNA"/>
</dbReference>
<dbReference type="RefSeq" id="XP_957807.1">
    <property type="nucleotide sequence ID" value="XM_952714.2"/>
</dbReference>
<dbReference type="SMR" id="Q7RZM8"/>
<dbReference type="FunCoup" id="Q7RZM8">
    <property type="interactions" value="1054"/>
</dbReference>
<dbReference type="STRING" id="367110.Q7RZM8"/>
<dbReference type="PaxDb" id="5141-EFNCRP00000000471"/>
<dbReference type="EnsemblFungi" id="EAA28571">
    <property type="protein sequence ID" value="EAA28571"/>
    <property type="gene ID" value="NCU00336"/>
</dbReference>
<dbReference type="GeneID" id="3873977"/>
<dbReference type="KEGG" id="ncr:NCU00336"/>
<dbReference type="VEuPathDB" id="FungiDB:NCU00336"/>
<dbReference type="HOGENOM" id="CLU_001128_3_1_1"/>
<dbReference type="InParanoid" id="Q7RZM8"/>
<dbReference type="OrthoDB" id="31183at2759"/>
<dbReference type="Proteomes" id="UP000001805">
    <property type="component" value="Chromosome 3, Linkage Group III"/>
</dbReference>
<dbReference type="GO" id="GO:0030686">
    <property type="term" value="C:90S preribosome"/>
    <property type="evidence" value="ECO:0000318"/>
    <property type="project" value="GO_Central"/>
</dbReference>
<dbReference type="GO" id="GO:0032040">
    <property type="term" value="C:small-subunit processome"/>
    <property type="evidence" value="ECO:0000318"/>
    <property type="project" value="GO_Central"/>
</dbReference>
<dbReference type="GO" id="GO:0034455">
    <property type="term" value="C:t-UTP complex"/>
    <property type="evidence" value="ECO:0000318"/>
    <property type="project" value="GO_Central"/>
</dbReference>
<dbReference type="GO" id="GO:0030515">
    <property type="term" value="F:snoRNA binding"/>
    <property type="evidence" value="ECO:0000318"/>
    <property type="project" value="GO_Central"/>
</dbReference>
<dbReference type="GO" id="GO:0000462">
    <property type="term" value="P:maturation of SSU-rRNA from tricistronic rRNA transcript (SSU-rRNA, 5.8S rRNA, LSU-rRNA)"/>
    <property type="evidence" value="ECO:0000318"/>
    <property type="project" value="GO_Central"/>
</dbReference>
<dbReference type="GO" id="GO:0045943">
    <property type="term" value="P:positive regulation of transcription by RNA polymerase I"/>
    <property type="evidence" value="ECO:0000318"/>
    <property type="project" value="GO_Central"/>
</dbReference>
<dbReference type="InterPro" id="IPR016024">
    <property type="entry name" value="ARM-type_fold"/>
</dbReference>
<dbReference type="InterPro" id="IPR012954">
    <property type="entry name" value="BP28_C_dom"/>
</dbReference>
<dbReference type="InterPro" id="IPR056473">
    <property type="entry name" value="HEAT_Utp10/HEAT1"/>
</dbReference>
<dbReference type="InterPro" id="IPR022125">
    <property type="entry name" value="U3snoRNP10_N"/>
</dbReference>
<dbReference type="InterPro" id="IPR040191">
    <property type="entry name" value="UTP10"/>
</dbReference>
<dbReference type="PANTHER" id="PTHR13457">
    <property type="entry name" value="BAP28"/>
    <property type="match status" value="1"/>
</dbReference>
<dbReference type="PANTHER" id="PTHR13457:SF1">
    <property type="entry name" value="HEAT REPEAT-CONTAINING PROTEIN 1"/>
    <property type="match status" value="1"/>
</dbReference>
<dbReference type="Pfam" id="PF08146">
    <property type="entry name" value="BP28CT"/>
    <property type="match status" value="1"/>
</dbReference>
<dbReference type="Pfam" id="PF23243">
    <property type="entry name" value="HEAT_HEATR1"/>
    <property type="match status" value="1"/>
</dbReference>
<dbReference type="Pfam" id="PF12397">
    <property type="entry name" value="U3snoRNP10"/>
    <property type="match status" value="1"/>
</dbReference>
<dbReference type="SMART" id="SM01036">
    <property type="entry name" value="BP28CT"/>
    <property type="match status" value="1"/>
</dbReference>
<dbReference type="SUPFAM" id="SSF48371">
    <property type="entry name" value="ARM repeat"/>
    <property type="match status" value="1"/>
</dbReference>
<reference evidence="5" key="1">
    <citation type="journal article" date="2003" name="Nature">
        <title>The genome sequence of the filamentous fungus Neurospora crassa.</title>
        <authorList>
            <person name="Galagan J.E."/>
            <person name="Calvo S.E."/>
            <person name="Borkovich K.A."/>
            <person name="Selker E.U."/>
            <person name="Read N.D."/>
            <person name="Jaffe D.B."/>
            <person name="FitzHugh W."/>
            <person name="Ma L.-J."/>
            <person name="Smirnov S."/>
            <person name="Purcell S."/>
            <person name="Rehman B."/>
            <person name="Elkins T."/>
            <person name="Engels R."/>
            <person name="Wang S."/>
            <person name="Nielsen C.B."/>
            <person name="Butler J."/>
            <person name="Endrizzi M."/>
            <person name="Qui D."/>
            <person name="Ianakiev P."/>
            <person name="Bell-Pedersen D."/>
            <person name="Nelson M.A."/>
            <person name="Werner-Washburne M."/>
            <person name="Selitrennikoff C.P."/>
            <person name="Kinsey J.A."/>
            <person name="Braun E.L."/>
            <person name="Zelter A."/>
            <person name="Schulte U."/>
            <person name="Kothe G.O."/>
            <person name="Jedd G."/>
            <person name="Mewes H.-W."/>
            <person name="Staben C."/>
            <person name="Marcotte E."/>
            <person name="Greenberg D."/>
            <person name="Roy A."/>
            <person name="Foley K."/>
            <person name="Naylor J."/>
            <person name="Stange-Thomann N."/>
            <person name="Barrett R."/>
            <person name="Gnerre S."/>
            <person name="Kamal M."/>
            <person name="Kamvysselis M."/>
            <person name="Mauceli E.W."/>
            <person name="Bielke C."/>
            <person name="Rudd S."/>
            <person name="Frishman D."/>
            <person name="Krystofova S."/>
            <person name="Rasmussen C."/>
            <person name="Metzenberg R.L."/>
            <person name="Perkins D.D."/>
            <person name="Kroken S."/>
            <person name="Cogoni C."/>
            <person name="Macino G."/>
            <person name="Catcheside D.E.A."/>
            <person name="Li W."/>
            <person name="Pratt R.J."/>
            <person name="Osmani S.A."/>
            <person name="DeSouza C.P.C."/>
            <person name="Glass N.L."/>
            <person name="Orbach M.J."/>
            <person name="Berglund J.A."/>
            <person name="Voelker R."/>
            <person name="Yarden O."/>
            <person name="Plamann M."/>
            <person name="Seiler S."/>
            <person name="Dunlap J.C."/>
            <person name="Radford A."/>
            <person name="Aramayo R."/>
            <person name="Natvig D.O."/>
            <person name="Alex L.A."/>
            <person name="Mannhaupt G."/>
            <person name="Ebbole D.J."/>
            <person name="Freitag M."/>
            <person name="Paulsen I."/>
            <person name="Sachs M.S."/>
            <person name="Lander E.S."/>
            <person name="Nusbaum C."/>
            <person name="Birren B.W."/>
        </authorList>
    </citation>
    <scope>NUCLEOTIDE SEQUENCE [LARGE SCALE GENOMIC DNA]</scope>
    <source>
        <strain>ATCC 24698 / 74-OR23-1A / CBS 708.71 / DSM 1257 / FGSC 987</strain>
    </source>
</reference>
<proteinExistence type="inferred from homology"/>
<comment type="function">
    <text evidence="1">Involved in nucleolar processing of pre-18S ribosomal RNA. Involved in ribosome biosynthesis (By similarity).</text>
</comment>
<comment type="subunit">
    <text evidence="1">Component of the ribosomal small subunit (SSU) processome.</text>
</comment>
<comment type="subcellular location">
    <subcellularLocation>
        <location evidence="1">Nucleus</location>
        <location evidence="1">Nucleolus</location>
    </subcellularLocation>
</comment>
<comment type="similarity">
    <text evidence="4">Belongs to the HEATR1/UTP10 family.</text>
</comment>
<accession>Q7RZM8</accession>
<protein>
    <recommendedName>
        <fullName>U3 small nucleolar RNA-associated protein 10</fullName>
    </recommendedName>
    <alternativeName>
        <fullName>Ribosome biogenesis protein 5</fullName>
    </alternativeName>
</protein>
<organism>
    <name type="scientific">Neurospora crassa (strain ATCC 24698 / 74-OR23-1A / CBS 708.71 / DSM 1257 / FGSC 987)</name>
    <dbReference type="NCBI Taxonomy" id="367110"/>
    <lineage>
        <taxon>Eukaryota</taxon>
        <taxon>Fungi</taxon>
        <taxon>Dikarya</taxon>
        <taxon>Ascomycota</taxon>
        <taxon>Pezizomycotina</taxon>
        <taxon>Sordariomycetes</taxon>
        <taxon>Sordariomycetidae</taxon>
        <taxon>Sordariales</taxon>
        <taxon>Sordariaceae</taxon>
        <taxon>Neurospora</taxon>
    </lineage>
</organism>
<keyword id="KW-0539">Nucleus</keyword>
<keyword id="KW-1185">Reference proteome</keyword>
<keyword id="KW-0677">Repeat</keyword>
<keyword id="KW-0687">Ribonucleoprotein</keyword>
<keyword id="KW-0690">Ribosome biogenesis</keyword>
<keyword id="KW-0698">rRNA processing</keyword>
<name>UTP10_NEUCR</name>
<evidence type="ECO:0000250" key="1">
    <source>
        <dbReference type="UniProtKB" id="P42945"/>
    </source>
</evidence>
<evidence type="ECO:0000255" key="2"/>
<evidence type="ECO:0000256" key="3">
    <source>
        <dbReference type="SAM" id="MobiDB-lite"/>
    </source>
</evidence>
<evidence type="ECO:0000305" key="4"/>
<evidence type="ECO:0000312" key="5">
    <source>
        <dbReference type="EMBL" id="EAA28571.1"/>
    </source>
</evidence>
<sequence length="1788" mass="196892">MSSLASQLAQIAANSRSTLNTKVLKAAHSKSLIFEPRVAATQTYPEIYSICLEGFEELCNLDSRFTKFTQSLWSPQSQEADRTQMSAAENAALDKHVEAFLHLCGSRLRLMPTIKAIEWLIRRFRVHEFNTAALIATFLPYHTIPAFVTLLSILPANIPKEYRFLDPYIRSLTAPPRAAIVQQATNRPELLTAISQYTLDSCKYQMEYPGLISFWGGVMVEATNGLLDKYRSGRRSIQIENDNALMQQLGPVLSDAMVMKSSPGLQIASYMVVTILAAKGGLADNALTAFMDQLVHGWTPETMRPGLVTLCIISQHRSAKQLSARVTKALLKVPEVASVMNEIGKDHRVDKLANGLALALVDRLHKKGDVRSLPVVNSLLLGNVLREKQIKVVYKSLLVAAHRINDQVDQDGAIRKELGTVLVSLSQAGGEVGDIVRATIDEVDFDIDALELTLGASIRPKLAVEDAPEAAAEDNNTPKVDKEAQVAQNFEKLSKLKPQTASCFAEEPLDLLEELYSLFLSVAANESNLQKFDEAPVLSRPQAPTKLFYASFYMRLWCGSLPTLAKVAALDRVKNLLKDEEFATLDFQAVVPYAIVALSDPAKKVRRAAAELVTVLGSFYETKPSKARRVWGSEGLYAKNAAVNWLDFDATKSLIHSVLIPSLEESILHEDHILAALTNALESSKSKDGDKKHLSHSTRFAIFKFLSSHVVGTPLIAVKLRLLQSLNQIKSISGTSRTDLLLSLLQWWARLSEAEAQQLLAREAVDEASVNNAFVDVVIANNEAGLRLIFELIRDSNVITRNGLVQSLFSRVQKIWSSMKAETQFSTARALLTLSQAVHPTSSEPDVIATEATDVLHKVELTTDILLDFLESLYDDIKKATEKPATKRRRVGSSEKSVDSQSPADVSASLSKATFVLELVQESEPAKHPELLPSLFTTLSELQHLRTVVGSELGYLQSLVLSSLLAMMPAYKDSKELTIDPAAGHGDILASCIQRSSSPTVINAALLLVASLARTAPDVVLHSVMPIFTFMGSSVLKQADDYSAHVVNQTVKEVIPPLIETFRKSRRNLVASTAELLTSFVVAYEHIPSHRKQDLFITLIENLGPEDFLFAVLAMFVDKYGATDNMLAFTTQIIGSFSVEIQLQTLIKHLDLISDIFKPKPVLSAALLAKVDSNSEQDVVKLATKQLTLLPKLLVNRRLRHEISGLAEKDDMESVKIRELYAQLLEGVLTLAGTVKPKKDTLYTRCAEALSNLLNLLSIAEFIKSVEALLDRPNVILRQKVLRALERRVDSESINNPKSREALLAFLPQLTAVIRESDDMNYKHTAVNCVDKIAEKYGKKDLDAVAAAAATIAGDSCLGQPSQELRVMALLCLASLVDVLQDAIVPVLPIAIPKALGCLEESIKAEKPDGALHNAAYAFMAALAQHIPYMISGAYLDRLLVCSNASAAAGLNEECRDSRTDCLQFVAKLIEGKVLFTALEKNWANAASSGYLALEEYLHVLGTALDKHPKSSIAKNTTLFTGIFLNAFDLRRSGVLSSTQELEKIELLINETSLKMIYKLNDAAFRPMFSHLMEWSTTGLPKSDLAGKAQRQVSTYGFLQHFFENLKSIVTSYASYIIDSAVKILSAPLTSDDVLKTLRSRVLRTLTKCFEHDQDGFWQAPAHFNAVAPVLVAQFGHAAGADNCTNDLVLAVVELAAAADSKEHHKEINSALLKHLRSEQAAVRLAVIKCEQELTARLGEEWLQSLPEMLPFISELQDDDDEVVERENRRWIVGIEETLGESLDNMLQ</sequence>
<feature type="chain" id="PRO_0000308509" description="U3 small nucleolar RNA-associated protein 10">
    <location>
        <begin position="1"/>
        <end position="1788"/>
    </location>
</feature>
<feature type="repeat" description="HEAT 1" evidence="2">
    <location>
        <begin position="585"/>
        <end position="622"/>
    </location>
</feature>
<feature type="repeat" description="HEAT 2" evidence="2">
    <location>
        <begin position="926"/>
        <end position="962"/>
    </location>
</feature>
<feature type="repeat" description="HEAT 3" evidence="2">
    <location>
        <begin position="1049"/>
        <end position="1086"/>
    </location>
</feature>
<feature type="repeat" description="HEAT 4" evidence="2">
    <location>
        <begin position="1257"/>
        <end position="1294"/>
    </location>
</feature>
<feature type="repeat" description="HEAT 5" evidence="2">
    <location>
        <begin position="1301"/>
        <end position="1339"/>
    </location>
</feature>
<feature type="repeat" description="HEAT 6" evidence="2">
    <location>
        <begin position="1703"/>
        <end position="1740"/>
    </location>
</feature>
<feature type="repeat" description="HEAT 7" evidence="2">
    <location>
        <begin position="1744"/>
        <end position="1781"/>
    </location>
</feature>
<feature type="region of interest" description="Disordered" evidence="3">
    <location>
        <begin position="884"/>
        <end position="905"/>
    </location>
</feature>